<proteinExistence type="inferred from homology"/>
<dbReference type="EMBL" id="CP000446">
    <property type="protein sequence ID" value="ABI37470.1"/>
    <property type="molecule type" value="Genomic_DNA"/>
</dbReference>
<dbReference type="RefSeq" id="WP_011621196.1">
    <property type="nucleotide sequence ID" value="NC_008321.1"/>
</dbReference>
<dbReference type="SMR" id="Q0HN97"/>
<dbReference type="GeneID" id="94726384"/>
<dbReference type="KEGG" id="she:Shewmr4_0390"/>
<dbReference type="HOGENOM" id="CLU_080880_3_0_6"/>
<dbReference type="GO" id="GO:0005829">
    <property type="term" value="C:cytosol"/>
    <property type="evidence" value="ECO:0007669"/>
    <property type="project" value="TreeGrafter"/>
</dbReference>
<dbReference type="GO" id="GO:0008199">
    <property type="term" value="F:ferric iron binding"/>
    <property type="evidence" value="ECO:0007669"/>
    <property type="project" value="InterPro"/>
</dbReference>
<dbReference type="GO" id="GO:0008198">
    <property type="term" value="F:ferrous iron binding"/>
    <property type="evidence" value="ECO:0007669"/>
    <property type="project" value="TreeGrafter"/>
</dbReference>
<dbReference type="GO" id="GO:0016226">
    <property type="term" value="P:iron-sulfur cluster assembly"/>
    <property type="evidence" value="ECO:0007669"/>
    <property type="project" value="UniProtKB-UniRule"/>
</dbReference>
<dbReference type="CDD" id="cd00503">
    <property type="entry name" value="Frataxin"/>
    <property type="match status" value="1"/>
</dbReference>
<dbReference type="FunFam" id="3.30.920.10:FF:000005">
    <property type="entry name" value="Iron-sulfur cluster assembly protein CyaY"/>
    <property type="match status" value="1"/>
</dbReference>
<dbReference type="Gene3D" id="3.30.920.10">
    <property type="entry name" value="Frataxin/CyaY"/>
    <property type="match status" value="1"/>
</dbReference>
<dbReference type="HAMAP" id="MF_00142">
    <property type="entry name" value="CyaY"/>
    <property type="match status" value="1"/>
</dbReference>
<dbReference type="InterPro" id="IPR047584">
    <property type="entry name" value="CyaY"/>
</dbReference>
<dbReference type="InterPro" id="IPR002908">
    <property type="entry name" value="Frataxin/CyaY"/>
</dbReference>
<dbReference type="InterPro" id="IPR036524">
    <property type="entry name" value="Frataxin/CyaY_sf"/>
</dbReference>
<dbReference type="InterPro" id="IPR020895">
    <property type="entry name" value="Frataxin_CS"/>
</dbReference>
<dbReference type="NCBIfam" id="TIGR03421">
    <property type="entry name" value="FeS_CyaY"/>
    <property type="match status" value="1"/>
</dbReference>
<dbReference type="PANTHER" id="PTHR16821">
    <property type="entry name" value="FRATAXIN"/>
    <property type="match status" value="1"/>
</dbReference>
<dbReference type="PANTHER" id="PTHR16821:SF2">
    <property type="entry name" value="FRATAXIN, MITOCHONDRIAL"/>
    <property type="match status" value="1"/>
</dbReference>
<dbReference type="Pfam" id="PF01491">
    <property type="entry name" value="Frataxin_Cyay"/>
    <property type="match status" value="1"/>
</dbReference>
<dbReference type="SMART" id="SM01219">
    <property type="entry name" value="Frataxin_Cyay"/>
    <property type="match status" value="1"/>
</dbReference>
<dbReference type="SUPFAM" id="SSF55387">
    <property type="entry name" value="Frataxin/Nqo15-like"/>
    <property type="match status" value="1"/>
</dbReference>
<dbReference type="PROSITE" id="PS01344">
    <property type="entry name" value="FRATAXIN_1"/>
    <property type="match status" value="1"/>
</dbReference>
<dbReference type="PROSITE" id="PS50810">
    <property type="entry name" value="FRATAXIN_2"/>
    <property type="match status" value="1"/>
</dbReference>
<comment type="function">
    <text evidence="1">Involved in iron-sulfur (Fe-S) cluster assembly. May act as a regulator of Fe-S biogenesis.</text>
</comment>
<comment type="similarity">
    <text evidence="1">Belongs to the frataxin family.</text>
</comment>
<reference key="1">
    <citation type="submission" date="2006-08" db="EMBL/GenBank/DDBJ databases">
        <title>Complete sequence of Shewanella sp. MR-4.</title>
        <authorList>
            <consortium name="US DOE Joint Genome Institute"/>
            <person name="Copeland A."/>
            <person name="Lucas S."/>
            <person name="Lapidus A."/>
            <person name="Barry K."/>
            <person name="Detter J.C."/>
            <person name="Glavina del Rio T."/>
            <person name="Hammon N."/>
            <person name="Israni S."/>
            <person name="Dalin E."/>
            <person name="Tice H."/>
            <person name="Pitluck S."/>
            <person name="Kiss H."/>
            <person name="Brettin T."/>
            <person name="Bruce D."/>
            <person name="Han C."/>
            <person name="Tapia R."/>
            <person name="Gilna P."/>
            <person name="Schmutz J."/>
            <person name="Larimer F."/>
            <person name="Land M."/>
            <person name="Hauser L."/>
            <person name="Kyrpides N."/>
            <person name="Mikhailova N."/>
            <person name="Nealson K."/>
            <person name="Konstantinidis K."/>
            <person name="Klappenbach J."/>
            <person name="Tiedje J."/>
            <person name="Richardson P."/>
        </authorList>
    </citation>
    <scope>NUCLEOTIDE SEQUENCE [LARGE SCALE GENOMIC DNA]</scope>
    <source>
        <strain>MR-4</strain>
    </source>
</reference>
<feature type="chain" id="PRO_1000010957" description="Iron-sulfur cluster assembly protein CyaY">
    <location>
        <begin position="1"/>
        <end position="109"/>
    </location>
</feature>
<gene>
    <name evidence="1" type="primary">cyaY</name>
    <name type="ordered locus">Shewmr4_0390</name>
</gene>
<organism>
    <name type="scientific">Shewanella sp. (strain MR-4)</name>
    <dbReference type="NCBI Taxonomy" id="60480"/>
    <lineage>
        <taxon>Bacteria</taxon>
        <taxon>Pseudomonadati</taxon>
        <taxon>Pseudomonadota</taxon>
        <taxon>Gammaproteobacteria</taxon>
        <taxon>Alteromonadales</taxon>
        <taxon>Shewanellaceae</taxon>
        <taxon>Shewanella</taxon>
    </lineage>
</organism>
<evidence type="ECO:0000255" key="1">
    <source>
        <dbReference type="HAMAP-Rule" id="MF_00142"/>
    </source>
</evidence>
<keyword id="KW-0408">Iron</keyword>
<keyword id="KW-0479">Metal-binding</keyword>
<protein>
    <recommendedName>
        <fullName evidence="1">Iron-sulfur cluster assembly protein CyaY</fullName>
    </recommendedName>
</protein>
<sequence length="109" mass="12171">MAMTDTEFHQLADDMFQAIETAIETAIDEQDADVDIDASGNVLQLEFVDGSKIVINKQEPLHEIWVATRFGGYHFGFVDGKWIDGRNGGEFMPFVQDSILRQSGIALSF</sequence>
<accession>Q0HN97</accession>
<name>CYAY_SHESM</name>